<gene>
    <name type="primary">RUNDC3A</name>
    <name type="synonym">RAP2IP</name>
    <name type="synonym">RPIP8</name>
</gene>
<comment type="function">
    <text evidence="1">May act as an effector of RAP2A in neuronal cells.</text>
</comment>
<comment type="subunit">
    <text evidence="1">Interacts with the GTP-bound form of RAP2A.</text>
</comment>
<comment type="interaction">
    <interactant intactId="EBI-747225">
        <id>Q59EK9</id>
    </interactant>
    <interactant intactId="EBI-541426">
        <id>Q9BXS5</id>
        <label>AP1M1</label>
    </interactant>
    <organismsDiffer>false</organismsDiffer>
    <experiments>4</experiments>
</comment>
<comment type="interaction">
    <interactant intactId="EBI-747225">
        <id>Q59EK9</id>
    </interactant>
    <interactant intactId="EBI-297683">
        <id>Q96CW1</id>
        <label>AP2M1</label>
    </interactant>
    <organismsDiffer>false</organismsDiffer>
    <experiments>3</experiments>
</comment>
<comment type="interaction">
    <interactant intactId="EBI-747225">
        <id>Q59EK9</id>
    </interactant>
    <interactant intactId="EBI-742909">
        <id>Q9H6L4</id>
        <label>ARMC7</label>
    </interactant>
    <organismsDiffer>false</organismsDiffer>
    <experiments>3</experiments>
</comment>
<comment type="interaction">
    <interactant intactId="EBI-747225">
        <id>Q59EK9</id>
    </interactant>
    <interactant intactId="EBI-1045974">
        <id>Q96S94</id>
        <label>CCNL2</label>
    </interactant>
    <organismsDiffer>false</organismsDiffer>
    <experiments>3</experiments>
</comment>
<comment type="interaction">
    <interactant intactId="EBI-747225">
        <id>Q59EK9</id>
    </interactant>
    <interactant intactId="EBI-351257">
        <id>P26196</id>
        <label>DDX6</label>
    </interactant>
    <organismsDiffer>false</organismsDiffer>
    <experiments>3</experiments>
</comment>
<comment type="interaction">
    <interactant intactId="EBI-747225">
        <id>Q59EK9</id>
    </interactant>
    <interactant intactId="EBI-347740">
        <id>P60228</id>
        <label>EIF3E</label>
    </interactant>
    <organismsDiffer>false</organismsDiffer>
    <experiments>4</experiments>
</comment>
<comment type="interaction">
    <interactant intactId="EBI-747225">
        <id>Q59EK9</id>
    </interactant>
    <interactant intactId="EBI-719941">
        <id>Q3B820</id>
        <label>FAM161A</label>
    </interactant>
    <organismsDiffer>false</organismsDiffer>
    <experiments>3</experiments>
</comment>
<comment type="interaction">
    <interactant intactId="EBI-747225">
        <id>Q59EK9</id>
    </interactant>
    <interactant intactId="EBI-744104">
        <id>P55040</id>
        <label>GEM</label>
    </interactant>
    <organismsDiffer>false</organismsDiffer>
    <experiments>3</experiments>
</comment>
<comment type="interaction">
    <interactant intactId="EBI-747225">
        <id>Q59EK9</id>
    </interactant>
    <interactant intactId="EBI-751857">
        <id>O15481</id>
        <label>MAGEB4</label>
    </interactant>
    <organismsDiffer>false</organismsDiffer>
    <experiments>3</experiments>
</comment>
<comment type="interaction">
    <interactant intactId="EBI-747225">
        <id>Q59EK9</id>
    </interactant>
    <interactant intactId="EBI-746778">
        <id>Q96A72</id>
        <label>MAGOHB</label>
    </interactant>
    <organismsDiffer>false</organismsDiffer>
    <experiments>3</experiments>
</comment>
<comment type="interaction">
    <interactant intactId="EBI-747225">
        <id>Q59EK9</id>
    </interactant>
    <interactant intactId="EBI-2371967">
        <id>Q9P015</id>
        <label>MRPL15</label>
    </interactant>
    <organismsDiffer>false</organismsDiffer>
    <experiments>3</experiments>
</comment>
<comment type="interaction">
    <interactant intactId="EBI-747225">
        <id>Q59EK9</id>
    </interactant>
    <interactant intactId="EBI-750871">
        <id>P61225</id>
        <label>RAP2B</label>
    </interactant>
    <organismsDiffer>false</organismsDiffer>
    <experiments>4</experiments>
</comment>
<comment type="interaction">
    <interactant intactId="EBI-747225">
        <id>Q59EK9</id>
    </interactant>
    <interactant intactId="EBI-727004">
        <id>O00560</id>
        <label>SDCBP</label>
    </interactant>
    <organismsDiffer>false</organismsDiffer>
    <experiments>3</experiments>
</comment>
<comment type="interaction">
    <interactant intactId="EBI-747225">
        <id>Q59EK9</id>
    </interactant>
    <interactant intactId="EBI-745392">
        <id>Q9BSW7</id>
        <label>SYT17</label>
    </interactant>
    <organismsDiffer>false</organismsDiffer>
    <experiments>3</experiments>
</comment>
<comment type="interaction">
    <interactant intactId="EBI-747225">
        <id>Q59EK9</id>
    </interactant>
    <interactant intactId="EBI-10223693">
        <id>Q05BL0</id>
        <label>TBRG1</label>
    </interactant>
    <organismsDiffer>false</organismsDiffer>
    <experiments>3</experiments>
</comment>
<comment type="interaction">
    <interactant intactId="EBI-747225">
        <id>Q59EK9</id>
    </interactant>
    <interactant intactId="EBI-10178002">
        <id>P0C1Z6-2</id>
        <label>TFPT</label>
    </interactant>
    <organismsDiffer>false</organismsDiffer>
    <experiments>3</experiments>
</comment>
<comment type="interaction">
    <interactant intactId="EBI-747225">
        <id>Q59EK9</id>
    </interactant>
    <interactant intactId="EBI-740727">
        <id>Q8TAU3</id>
        <label>ZNF417</label>
    </interactant>
    <organismsDiffer>false</organismsDiffer>
    <experiments>3</experiments>
</comment>
<comment type="interaction">
    <interactant intactId="EBI-747225">
        <id>Q59EK9</id>
    </interactant>
    <interactant intactId="EBI-6427977">
        <id>Q96SQ5</id>
        <label>ZNF587</label>
    </interactant>
    <organismsDiffer>false</organismsDiffer>
    <experiments>3</experiments>
</comment>
<comment type="interaction">
    <interactant intactId="EBI-747225">
        <id>Q59EK9</id>
    </interactant>
    <interactant intactId="EBI-10249899">
        <id>Q9H614</id>
    </interactant>
    <organismsDiffer>false</organismsDiffer>
    <experiments>3</experiments>
</comment>
<comment type="interaction">
    <interactant intactId="EBI-11957366">
        <id>Q59EK9-3</id>
    </interactant>
    <interactant intactId="EBI-541426">
        <id>Q9BXS5</id>
        <label>AP1M1</label>
    </interactant>
    <organismsDiffer>false</organismsDiffer>
    <experiments>3</experiments>
</comment>
<comment type="interaction">
    <interactant intactId="EBI-11957366">
        <id>Q59EK9-3</id>
    </interactant>
    <interactant intactId="EBI-742909">
        <id>Q9H6L4</id>
        <label>ARMC7</label>
    </interactant>
    <organismsDiffer>false</organismsDiffer>
    <experiments>3</experiments>
</comment>
<comment type="interaction">
    <interactant intactId="EBI-11957366">
        <id>Q59EK9-3</id>
    </interactant>
    <interactant intactId="EBI-12024864">
        <id>Q96S94-5</id>
        <label>CCNL2</label>
    </interactant>
    <organismsDiffer>false</organismsDiffer>
    <experiments>3</experiments>
</comment>
<comment type="interaction">
    <interactant intactId="EBI-11957366">
        <id>Q59EK9-3</id>
    </interactant>
    <interactant intactId="EBI-347740">
        <id>P60228</id>
        <label>EIF3E</label>
    </interactant>
    <organismsDiffer>false</organismsDiffer>
    <experiments>3</experiments>
</comment>
<comment type="interaction">
    <interactant intactId="EBI-11957366">
        <id>Q59EK9-3</id>
    </interactant>
    <interactant intactId="EBI-744099">
        <id>Q9H0I2</id>
        <label>ENKD1</label>
    </interactant>
    <organismsDiffer>false</organismsDiffer>
    <experiments>3</experiments>
</comment>
<comment type="interaction">
    <interactant intactId="EBI-11957366">
        <id>Q59EK9-3</id>
    </interactant>
    <interactant intactId="EBI-739832">
        <id>Q8TBB1</id>
        <label>LNX1</label>
    </interactant>
    <organismsDiffer>false</organismsDiffer>
    <experiments>3</experiments>
</comment>
<comment type="interaction">
    <interactant intactId="EBI-11957366">
        <id>Q59EK9-3</id>
    </interactant>
    <interactant intactId="EBI-751857">
        <id>O15481</id>
        <label>MAGEB4</label>
    </interactant>
    <organismsDiffer>false</organismsDiffer>
    <experiments>3</experiments>
</comment>
<comment type="interaction">
    <interactant intactId="EBI-11957366">
        <id>Q59EK9-3</id>
    </interactant>
    <interactant intactId="EBI-11989378">
        <id>Q8NHZ7</id>
        <label>MBD3L2</label>
    </interactant>
    <organismsDiffer>false</organismsDiffer>
    <experiments>3</experiments>
</comment>
<comment type="interaction">
    <interactant intactId="EBI-11957366">
        <id>Q59EK9-3</id>
    </interactant>
    <interactant intactId="EBI-1567797">
        <id>Q8WWY3</id>
        <label>PRPF31</label>
    </interactant>
    <organismsDiffer>false</organismsDiffer>
    <experiments>3</experiments>
</comment>
<comment type="interaction">
    <interactant intactId="EBI-11957366">
        <id>Q59EK9-3</id>
    </interactant>
    <interactant intactId="EBI-602366">
        <id>P10114</id>
        <label>RAP2A</label>
    </interactant>
    <organismsDiffer>false</organismsDiffer>
    <experiments>3</experiments>
</comment>
<comment type="interaction">
    <interactant intactId="EBI-11957366">
        <id>Q59EK9-3</id>
    </interactant>
    <interactant intactId="EBI-750871">
        <id>P61225</id>
        <label>RAP2B</label>
    </interactant>
    <organismsDiffer>false</organismsDiffer>
    <experiments>3</experiments>
</comment>
<comment type="interaction">
    <interactant intactId="EBI-11957366">
        <id>Q59EK9-3</id>
    </interactant>
    <interactant intactId="EBI-727004">
        <id>O00560</id>
        <label>SDCBP</label>
    </interactant>
    <organismsDiffer>false</organismsDiffer>
    <experiments>3</experiments>
</comment>
<comment type="interaction">
    <interactant intactId="EBI-11957366">
        <id>Q59EK9-3</id>
    </interactant>
    <interactant intactId="EBI-16429215">
        <id>A0A0S2Z4F2</id>
        <label>TEAD4</label>
    </interactant>
    <organismsDiffer>false</organismsDiffer>
    <experiments>3</experiments>
</comment>
<comment type="interaction">
    <interactant intactId="EBI-11957366">
        <id>Q59EK9-3</id>
    </interactant>
    <interactant intactId="EBI-747736">
        <id>Q15561</id>
        <label>TEAD4</label>
    </interactant>
    <organismsDiffer>false</organismsDiffer>
    <experiments>3</experiments>
</comment>
<comment type="interaction">
    <interactant intactId="EBI-11957366">
        <id>Q59EK9-3</id>
    </interactant>
    <interactant intactId="EBI-10241197">
        <id>Q3SY00</id>
        <label>TSGA10IP</label>
    </interactant>
    <organismsDiffer>false</organismsDiffer>
    <experiments>3</experiments>
</comment>
<comment type="interaction">
    <interactant intactId="EBI-11957366">
        <id>Q59EK9-3</id>
    </interactant>
    <interactant intactId="EBI-17208936">
        <id>P0CB47</id>
        <label>UBTFL1</label>
    </interactant>
    <organismsDiffer>false</organismsDiffer>
    <experiments>3</experiments>
</comment>
<comment type="interaction">
    <interactant intactId="EBI-11957366">
        <id>Q59EK9-3</id>
    </interactant>
    <interactant intactId="EBI-743272">
        <id>O75604</id>
        <label>USP2</label>
    </interactant>
    <organismsDiffer>false</organismsDiffer>
    <experiments>3</experiments>
</comment>
<comment type="interaction">
    <interactant intactId="EBI-11957366">
        <id>Q59EK9-3</id>
    </interactant>
    <interactant intactId="EBI-10177272">
        <id>P15622-3</id>
        <label>ZNF250</label>
    </interactant>
    <organismsDiffer>false</organismsDiffer>
    <experiments>3</experiments>
</comment>
<comment type="interaction">
    <interactant intactId="EBI-11957366">
        <id>Q59EK9-3</id>
    </interactant>
    <interactant intactId="EBI-740727">
        <id>Q8TAU3</id>
        <label>ZNF417</label>
    </interactant>
    <organismsDiffer>false</organismsDiffer>
    <experiments>3</experiments>
</comment>
<comment type="interaction">
    <interactant intactId="EBI-11957366">
        <id>Q59EK9-3</id>
    </interactant>
    <interactant intactId="EBI-6427977">
        <id>Q96SQ5</id>
        <label>ZNF587</label>
    </interactant>
    <organismsDiffer>false</organismsDiffer>
    <experiments>3</experiments>
</comment>
<comment type="interaction">
    <interactant intactId="EBI-11957366">
        <id>Q59EK9-3</id>
    </interactant>
    <interactant intactId="EBI-14544035">
        <id>O75541-2</id>
        <label>ZNF821</label>
    </interactant>
    <organismsDiffer>false</organismsDiffer>
    <experiments>3</experiments>
</comment>
<comment type="interaction">
    <interactant intactId="EBI-11957366">
        <id>Q59EK9-3</id>
    </interactant>
    <interactant intactId="EBI-5667516">
        <id>Q9Y2P0</id>
        <label>ZNF835</label>
    </interactant>
    <organismsDiffer>false</organismsDiffer>
    <experiments>3</experiments>
</comment>
<comment type="alternative products">
    <event type="alternative splicing"/>
    <isoform>
        <id>Q59EK9-1</id>
        <name>1</name>
        <sequence type="displayed"/>
    </isoform>
    <isoform>
        <id>Q59EK9-2</id>
        <name>2</name>
        <sequence type="described" ref="VSP_032153 VSP_032155 VSP_032156"/>
    </isoform>
    <isoform>
        <id>Q59EK9-3</id>
        <name>3</name>
        <sequence type="described" ref="VSP_032155 VSP_032156"/>
    </isoform>
    <isoform>
        <id>Q59EK9-4</id>
        <name>4</name>
        <sequence type="described" ref="VSP_032154"/>
    </isoform>
</comment>
<comment type="similarity">
    <text evidence="12">Belongs to the RUNDC3 family.</text>
</comment>
<comment type="sequence caution" evidence="12">
    <conflict type="erroneous initiation">
        <sequence resource="EMBL-CDS" id="BAD93039"/>
    </conflict>
</comment>
<protein>
    <recommendedName>
        <fullName>RUN domain-containing protein 3A</fullName>
    </recommendedName>
    <alternativeName>
        <fullName>Rap2-interacting protein 8</fullName>
        <shortName>RPIP-8</shortName>
    </alternativeName>
</protein>
<dbReference type="EMBL" id="U93871">
    <property type="protein sequence ID" value="AAB68767.1"/>
    <property type="molecule type" value="mRNA"/>
</dbReference>
<dbReference type="EMBL" id="AF055026">
    <property type="protein sequence ID" value="AAC09366.1"/>
    <property type="molecule type" value="mRNA"/>
</dbReference>
<dbReference type="EMBL" id="AK313669">
    <property type="protein sequence ID" value="BAG36421.1"/>
    <property type="molecule type" value="mRNA"/>
</dbReference>
<dbReference type="EMBL" id="CR456748">
    <property type="protein sequence ID" value="CAG33029.1"/>
    <property type="molecule type" value="mRNA"/>
</dbReference>
<dbReference type="EMBL" id="AB209802">
    <property type="protein sequence ID" value="BAD93039.1"/>
    <property type="status" value="ALT_INIT"/>
    <property type="molecule type" value="mRNA"/>
</dbReference>
<dbReference type="EMBL" id="BX537443">
    <property type="protein sequence ID" value="CAD97685.1"/>
    <property type="molecule type" value="mRNA"/>
</dbReference>
<dbReference type="EMBL" id="AL133657">
    <property type="protein sequence ID" value="CAB63771.1"/>
    <property type="molecule type" value="mRNA"/>
</dbReference>
<dbReference type="EMBL" id="CH471178">
    <property type="protein sequence ID" value="EAW51609.1"/>
    <property type="molecule type" value="Genomic_DNA"/>
</dbReference>
<dbReference type="EMBL" id="CH471178">
    <property type="protein sequence ID" value="EAW51610.1"/>
    <property type="molecule type" value="Genomic_DNA"/>
</dbReference>
<dbReference type="EMBL" id="BC006194">
    <property type="protein sequence ID" value="AAH06194.1"/>
    <property type="molecule type" value="mRNA"/>
</dbReference>
<dbReference type="CCDS" id="CCDS45698.1">
    <molecule id="Q59EK9-1"/>
</dbReference>
<dbReference type="CCDS" id="CCDS45699.1">
    <molecule id="Q59EK9-3"/>
</dbReference>
<dbReference type="CCDS" id="CCDS59294.1">
    <molecule id="Q59EK9-2"/>
</dbReference>
<dbReference type="RefSeq" id="NP_001138297.1">
    <molecule id="Q59EK9-1"/>
    <property type="nucleotide sequence ID" value="NM_001144825.2"/>
</dbReference>
<dbReference type="RefSeq" id="NP_001138298.1">
    <molecule id="Q59EK9-2"/>
    <property type="nucleotide sequence ID" value="NM_001144826.2"/>
</dbReference>
<dbReference type="RefSeq" id="NP_006686.1">
    <molecule id="Q59EK9-3"/>
    <property type="nucleotide sequence ID" value="NM_006695.5"/>
</dbReference>
<dbReference type="SMR" id="Q59EK9"/>
<dbReference type="BioGRID" id="116106">
    <property type="interactions" value="62"/>
</dbReference>
<dbReference type="FunCoup" id="Q59EK9">
    <property type="interactions" value="948"/>
</dbReference>
<dbReference type="IntAct" id="Q59EK9">
    <property type="interactions" value="61"/>
</dbReference>
<dbReference type="MINT" id="Q59EK9"/>
<dbReference type="STRING" id="9606.ENSP00000410862"/>
<dbReference type="GlyGen" id="Q59EK9">
    <property type="glycosylation" value="1 site"/>
</dbReference>
<dbReference type="iPTMnet" id="Q59EK9"/>
<dbReference type="PhosphoSitePlus" id="Q59EK9"/>
<dbReference type="BioMuta" id="RUNDC3A"/>
<dbReference type="DMDM" id="172045944"/>
<dbReference type="MassIVE" id="Q59EK9"/>
<dbReference type="PaxDb" id="9606-ENSP00000410862"/>
<dbReference type="PeptideAtlas" id="Q59EK9"/>
<dbReference type="ProteomicsDB" id="62634">
    <molecule id="Q59EK9-1"/>
</dbReference>
<dbReference type="ProteomicsDB" id="62635">
    <molecule id="Q59EK9-2"/>
</dbReference>
<dbReference type="ProteomicsDB" id="62636">
    <molecule id="Q59EK9-3"/>
</dbReference>
<dbReference type="ProteomicsDB" id="62637">
    <molecule id="Q59EK9-4"/>
</dbReference>
<dbReference type="Antibodypedia" id="8218">
    <property type="antibodies" value="216 antibodies from 22 providers"/>
</dbReference>
<dbReference type="DNASU" id="10900"/>
<dbReference type="Ensembl" id="ENST00000225441.11">
    <molecule id="Q59EK9-3"/>
    <property type="protein sequence ID" value="ENSP00000225441.7"/>
    <property type="gene ID" value="ENSG00000108309.14"/>
</dbReference>
<dbReference type="Ensembl" id="ENST00000426726.8">
    <molecule id="Q59EK9-1"/>
    <property type="protein sequence ID" value="ENSP00000410862.2"/>
    <property type="gene ID" value="ENSG00000108309.14"/>
</dbReference>
<dbReference type="Ensembl" id="ENST00000590941.5">
    <molecule id="Q59EK9-2"/>
    <property type="protein sequence ID" value="ENSP00000468214.1"/>
    <property type="gene ID" value="ENSG00000108309.14"/>
</dbReference>
<dbReference type="GeneID" id="10900"/>
<dbReference type="KEGG" id="hsa:10900"/>
<dbReference type="MANE-Select" id="ENST00000426726.8">
    <property type="protein sequence ID" value="ENSP00000410862.2"/>
    <property type="RefSeq nucleotide sequence ID" value="NM_001144825.2"/>
    <property type="RefSeq protein sequence ID" value="NP_001138297.1"/>
</dbReference>
<dbReference type="UCSC" id="uc002igi.4">
    <molecule id="Q59EK9-1"/>
    <property type="organism name" value="human"/>
</dbReference>
<dbReference type="AGR" id="HGNC:16984"/>
<dbReference type="CTD" id="10900"/>
<dbReference type="DisGeNET" id="10900"/>
<dbReference type="GeneCards" id="RUNDC3A"/>
<dbReference type="HGNC" id="HGNC:16984">
    <property type="gene designation" value="RUNDC3A"/>
</dbReference>
<dbReference type="HPA" id="ENSG00000108309">
    <property type="expression patterns" value="Group enriched (brain, pituitary gland)"/>
</dbReference>
<dbReference type="MIM" id="605448">
    <property type="type" value="gene"/>
</dbReference>
<dbReference type="neXtProt" id="NX_Q59EK9"/>
<dbReference type="OpenTargets" id="ENSG00000108309"/>
<dbReference type="PharmGKB" id="PA162402277"/>
<dbReference type="VEuPathDB" id="HostDB:ENSG00000108309"/>
<dbReference type="eggNOG" id="KOG4381">
    <property type="taxonomic scope" value="Eukaryota"/>
</dbReference>
<dbReference type="GeneTree" id="ENSGT00940000158922"/>
<dbReference type="HOGENOM" id="CLU_045987_0_0_1"/>
<dbReference type="InParanoid" id="Q59EK9"/>
<dbReference type="OMA" id="FWEYVRL"/>
<dbReference type="OrthoDB" id="10029904at2759"/>
<dbReference type="PAN-GO" id="Q59EK9">
    <property type="GO annotations" value="2 GO annotations based on evolutionary models"/>
</dbReference>
<dbReference type="PhylomeDB" id="Q59EK9"/>
<dbReference type="TreeFam" id="TF323904"/>
<dbReference type="PathwayCommons" id="Q59EK9"/>
<dbReference type="SignaLink" id="Q59EK9"/>
<dbReference type="BioGRID-ORCS" id="10900">
    <property type="hits" value="15 hits in 1135 CRISPR screens"/>
</dbReference>
<dbReference type="ChiTaRS" id="RUNDC3A">
    <property type="organism name" value="human"/>
</dbReference>
<dbReference type="GeneWiki" id="RUNDC3A"/>
<dbReference type="GenomeRNAi" id="10900"/>
<dbReference type="Pharos" id="Q59EK9">
    <property type="development level" value="Tdark"/>
</dbReference>
<dbReference type="PRO" id="PR:Q59EK9"/>
<dbReference type="Proteomes" id="UP000005640">
    <property type="component" value="Chromosome 17"/>
</dbReference>
<dbReference type="RNAct" id="Q59EK9">
    <property type="molecule type" value="protein"/>
</dbReference>
<dbReference type="Bgee" id="ENSG00000108309">
    <property type="expression patterns" value="Expressed in right frontal lobe and 162 other cell types or tissues"/>
</dbReference>
<dbReference type="GO" id="GO:0043231">
    <property type="term" value="C:intracellular membrane-bounded organelle"/>
    <property type="evidence" value="ECO:0000314"/>
    <property type="project" value="HPA"/>
</dbReference>
<dbReference type="GO" id="GO:0030695">
    <property type="term" value="F:GTPase regulator activity"/>
    <property type="evidence" value="ECO:0000304"/>
    <property type="project" value="ProtInc"/>
</dbReference>
<dbReference type="GO" id="GO:0010753">
    <property type="term" value="P:positive regulation of cGMP-mediated signaling"/>
    <property type="evidence" value="ECO:0000318"/>
    <property type="project" value="GO_Central"/>
</dbReference>
<dbReference type="GO" id="GO:0007264">
    <property type="term" value="P:small GTPase-mediated signal transduction"/>
    <property type="evidence" value="ECO:0000304"/>
    <property type="project" value="ProtInc"/>
</dbReference>
<dbReference type="CDD" id="cd17699">
    <property type="entry name" value="RUN_RUNDC3A"/>
    <property type="match status" value="1"/>
</dbReference>
<dbReference type="FunFam" id="1.20.58.900:FF:000005">
    <property type="entry name" value="RUN domain-containing protein 3A isoform X1"/>
    <property type="match status" value="1"/>
</dbReference>
<dbReference type="Gene3D" id="1.20.58.900">
    <property type="match status" value="1"/>
</dbReference>
<dbReference type="InterPro" id="IPR004012">
    <property type="entry name" value="Run_dom"/>
</dbReference>
<dbReference type="InterPro" id="IPR037213">
    <property type="entry name" value="Run_dom_sf"/>
</dbReference>
<dbReference type="InterPro" id="IPR047338">
    <property type="entry name" value="RUN_RUNDC3A"/>
</dbReference>
<dbReference type="InterPro" id="IPR047340">
    <property type="entry name" value="RUNDC3A_B"/>
</dbReference>
<dbReference type="PANTHER" id="PTHR46251">
    <property type="entry name" value="RUN DOMAIN-CONTAINING 3 PROTEIN RUNDC3"/>
    <property type="match status" value="1"/>
</dbReference>
<dbReference type="PANTHER" id="PTHR46251:SF4">
    <property type="entry name" value="RUN DOMAIN-CONTAINING PROTEIN 3A"/>
    <property type="match status" value="1"/>
</dbReference>
<dbReference type="Pfam" id="PF02759">
    <property type="entry name" value="RUN"/>
    <property type="match status" value="1"/>
</dbReference>
<dbReference type="SMART" id="SM00593">
    <property type="entry name" value="RUN"/>
    <property type="match status" value="1"/>
</dbReference>
<dbReference type="SUPFAM" id="SSF140741">
    <property type="entry name" value="RUN domain-like"/>
    <property type="match status" value="1"/>
</dbReference>
<dbReference type="PROSITE" id="PS50826">
    <property type="entry name" value="RUN"/>
    <property type="match status" value="1"/>
</dbReference>
<organism>
    <name type="scientific">Homo sapiens</name>
    <name type="common">Human</name>
    <dbReference type="NCBI Taxonomy" id="9606"/>
    <lineage>
        <taxon>Eukaryota</taxon>
        <taxon>Metazoa</taxon>
        <taxon>Chordata</taxon>
        <taxon>Craniata</taxon>
        <taxon>Vertebrata</taxon>
        <taxon>Euteleostomi</taxon>
        <taxon>Mammalia</taxon>
        <taxon>Eutheria</taxon>
        <taxon>Euarchontoglires</taxon>
        <taxon>Primates</taxon>
        <taxon>Haplorrhini</taxon>
        <taxon>Catarrhini</taxon>
        <taxon>Hominidae</taxon>
        <taxon>Homo</taxon>
    </lineage>
</organism>
<keyword id="KW-0025">Alternative splicing</keyword>
<keyword id="KW-0175">Coiled coil</keyword>
<keyword id="KW-0597">Phosphoprotein</keyword>
<keyword id="KW-1267">Proteomics identification</keyword>
<keyword id="KW-1185">Reference proteome</keyword>
<feature type="chain" id="PRO_0000324155" description="RUN domain-containing protein 3A">
    <location>
        <begin position="1"/>
        <end position="446"/>
    </location>
</feature>
<feature type="domain" description="RUN" evidence="4">
    <location>
        <begin position="52"/>
        <end position="189"/>
    </location>
</feature>
<feature type="region of interest" description="Interaction with RAP2A" evidence="1">
    <location>
        <begin position="1"/>
        <end position="298"/>
    </location>
</feature>
<feature type="region of interest" description="Disordered" evidence="5">
    <location>
        <begin position="216"/>
        <end position="239"/>
    </location>
</feature>
<feature type="region of interest" description="Disordered" evidence="5">
    <location>
        <begin position="372"/>
        <end position="404"/>
    </location>
</feature>
<feature type="coiled-coil region" evidence="3">
    <location>
        <begin position="267"/>
        <end position="322"/>
    </location>
</feature>
<feature type="compositionally biased region" description="Polar residues" evidence="5">
    <location>
        <begin position="372"/>
        <end position="384"/>
    </location>
</feature>
<feature type="modified residue" description="Phosphothreonine" evidence="2">
    <location>
        <position position="215"/>
    </location>
</feature>
<feature type="modified residue" description="Phosphoserine" evidence="2">
    <location>
        <position position="232"/>
    </location>
</feature>
<feature type="modified residue" description="Phosphoserine" evidence="2">
    <location>
        <position position="416"/>
    </location>
</feature>
<feature type="modified residue" description="Phosphoserine" evidence="2">
    <location>
        <position position="419"/>
    </location>
</feature>
<feature type="splice variant" id="VSP_032153" description="In isoform 2." evidence="8 9">
    <location>
        <begin position="75"/>
        <end position="79"/>
    </location>
</feature>
<feature type="splice variant" id="VSP_032154" description="In isoform 4." evidence="8">
    <location>
        <begin position="365"/>
        <end position="446"/>
    </location>
</feature>
<feature type="splice variant" id="VSP_032155" description="In isoform 2 and isoform 3." evidence="6 7 8 9 10 11">
    <original>KDPTP</original>
    <variation>SSEPN</variation>
    <location>
        <begin position="401"/>
        <end position="405"/>
    </location>
</feature>
<feature type="splice variant" id="VSP_032156" description="In isoform 2 and isoform 3." evidence="6 7 8 9 10 11">
    <location>
        <begin position="406"/>
        <end position="446"/>
    </location>
</feature>
<feature type="sequence conflict" description="In Ref. 6; CAD97685." evidence="12" ref="6">
    <original>M</original>
    <variation>V</variation>
    <location>
        <position position="134"/>
    </location>
</feature>
<proteinExistence type="evidence at protein level"/>
<name>RUN3A_HUMAN</name>
<reference key="1">
    <citation type="journal article" date="1998" name="Eur. J. Biochem.">
        <title>Identification of a specific effector of the small GTP-binding protein Rap2.</title>
        <authorList>
            <person name="Janoueix-Lerosey I."/>
            <person name="Pasheva E."/>
            <person name="de Tand M.-F."/>
            <person name="Tavitian A."/>
            <person name="de Gunzburg J."/>
        </authorList>
    </citation>
    <scope>NUCLEOTIDE SEQUENCE [MRNA] (ISOFORM 2)</scope>
    <scope>IDENTIFICATION (ISOFORM 1)</scope>
</reference>
<reference key="2">
    <citation type="submission" date="1998-03" db="EMBL/GenBank/DDBJ databases">
        <authorList>
            <person name="Yu W."/>
            <person name="Gibbs R.A."/>
        </authorList>
    </citation>
    <scope>NUCLEOTIDE SEQUENCE [LARGE SCALE MRNA] (ISOFORM 3)</scope>
    <source>
        <tissue>Brain</tissue>
    </source>
</reference>
<reference key="3">
    <citation type="journal article" date="2004" name="Nat. Genet.">
        <title>Complete sequencing and characterization of 21,243 full-length human cDNAs.</title>
        <authorList>
            <person name="Ota T."/>
            <person name="Suzuki Y."/>
            <person name="Nishikawa T."/>
            <person name="Otsuki T."/>
            <person name="Sugiyama T."/>
            <person name="Irie R."/>
            <person name="Wakamatsu A."/>
            <person name="Hayashi K."/>
            <person name="Sato H."/>
            <person name="Nagai K."/>
            <person name="Kimura K."/>
            <person name="Makita H."/>
            <person name="Sekine M."/>
            <person name="Obayashi M."/>
            <person name="Nishi T."/>
            <person name="Shibahara T."/>
            <person name="Tanaka T."/>
            <person name="Ishii S."/>
            <person name="Yamamoto J."/>
            <person name="Saito K."/>
            <person name="Kawai Y."/>
            <person name="Isono Y."/>
            <person name="Nakamura Y."/>
            <person name="Nagahari K."/>
            <person name="Murakami K."/>
            <person name="Yasuda T."/>
            <person name="Iwayanagi T."/>
            <person name="Wagatsuma M."/>
            <person name="Shiratori A."/>
            <person name="Sudo H."/>
            <person name="Hosoiri T."/>
            <person name="Kaku Y."/>
            <person name="Kodaira H."/>
            <person name="Kondo H."/>
            <person name="Sugawara M."/>
            <person name="Takahashi M."/>
            <person name="Kanda K."/>
            <person name="Yokoi T."/>
            <person name="Furuya T."/>
            <person name="Kikkawa E."/>
            <person name="Omura Y."/>
            <person name="Abe K."/>
            <person name="Kamihara K."/>
            <person name="Katsuta N."/>
            <person name="Sato K."/>
            <person name="Tanikawa M."/>
            <person name="Yamazaki M."/>
            <person name="Ninomiya K."/>
            <person name="Ishibashi T."/>
            <person name="Yamashita H."/>
            <person name="Murakawa K."/>
            <person name="Fujimori K."/>
            <person name="Tanai H."/>
            <person name="Kimata M."/>
            <person name="Watanabe M."/>
            <person name="Hiraoka S."/>
            <person name="Chiba Y."/>
            <person name="Ishida S."/>
            <person name="Ono Y."/>
            <person name="Takiguchi S."/>
            <person name="Watanabe S."/>
            <person name="Yosida M."/>
            <person name="Hotuta T."/>
            <person name="Kusano J."/>
            <person name="Kanehori K."/>
            <person name="Takahashi-Fujii A."/>
            <person name="Hara H."/>
            <person name="Tanase T.-O."/>
            <person name="Nomura Y."/>
            <person name="Togiya S."/>
            <person name="Komai F."/>
            <person name="Hara R."/>
            <person name="Takeuchi K."/>
            <person name="Arita M."/>
            <person name="Imose N."/>
            <person name="Musashino K."/>
            <person name="Yuuki H."/>
            <person name="Oshima A."/>
            <person name="Sasaki N."/>
            <person name="Aotsuka S."/>
            <person name="Yoshikawa Y."/>
            <person name="Matsunawa H."/>
            <person name="Ichihara T."/>
            <person name="Shiohata N."/>
            <person name="Sano S."/>
            <person name="Moriya S."/>
            <person name="Momiyama H."/>
            <person name="Satoh N."/>
            <person name="Takami S."/>
            <person name="Terashima Y."/>
            <person name="Suzuki O."/>
            <person name="Nakagawa S."/>
            <person name="Senoh A."/>
            <person name="Mizoguchi H."/>
            <person name="Goto Y."/>
            <person name="Shimizu F."/>
            <person name="Wakebe H."/>
            <person name="Hishigaki H."/>
            <person name="Watanabe T."/>
            <person name="Sugiyama A."/>
            <person name="Takemoto M."/>
            <person name="Kawakami B."/>
            <person name="Yamazaki M."/>
            <person name="Watanabe K."/>
            <person name="Kumagai A."/>
            <person name="Itakura S."/>
            <person name="Fukuzumi Y."/>
            <person name="Fujimori Y."/>
            <person name="Komiyama M."/>
            <person name="Tashiro H."/>
            <person name="Tanigami A."/>
            <person name="Fujiwara T."/>
            <person name="Ono T."/>
            <person name="Yamada K."/>
            <person name="Fujii Y."/>
            <person name="Ozaki K."/>
            <person name="Hirao M."/>
            <person name="Ohmori Y."/>
            <person name="Kawabata A."/>
            <person name="Hikiji T."/>
            <person name="Kobatake N."/>
            <person name="Inagaki H."/>
            <person name="Ikema Y."/>
            <person name="Okamoto S."/>
            <person name="Okitani R."/>
            <person name="Kawakami T."/>
            <person name="Noguchi S."/>
            <person name="Itoh T."/>
            <person name="Shigeta K."/>
            <person name="Senba T."/>
            <person name="Matsumura K."/>
            <person name="Nakajima Y."/>
            <person name="Mizuno T."/>
            <person name="Morinaga M."/>
            <person name="Sasaki M."/>
            <person name="Togashi T."/>
            <person name="Oyama M."/>
            <person name="Hata H."/>
            <person name="Watanabe M."/>
            <person name="Komatsu T."/>
            <person name="Mizushima-Sugano J."/>
            <person name="Satoh T."/>
            <person name="Shirai Y."/>
            <person name="Takahashi Y."/>
            <person name="Nakagawa K."/>
            <person name="Okumura K."/>
            <person name="Nagase T."/>
            <person name="Nomura N."/>
            <person name="Kikuchi H."/>
            <person name="Masuho Y."/>
            <person name="Yamashita R."/>
            <person name="Nakai K."/>
            <person name="Yada T."/>
            <person name="Nakamura Y."/>
            <person name="Ohara O."/>
            <person name="Isogai T."/>
            <person name="Sugano S."/>
        </authorList>
    </citation>
    <scope>NUCLEOTIDE SEQUENCE [LARGE SCALE MRNA] (ISOFORM 3)</scope>
    <source>
        <tissue>Caudate nucleus</tissue>
    </source>
</reference>
<reference key="4">
    <citation type="submission" date="2004-06" db="EMBL/GenBank/DDBJ databases">
        <title>Cloning of human full open reading frames in Gateway(TM) system entry vector (pDONR201).</title>
        <authorList>
            <person name="Ebert L."/>
            <person name="Schick M."/>
            <person name="Neubert P."/>
            <person name="Schatten R."/>
            <person name="Henze S."/>
            <person name="Korn B."/>
        </authorList>
    </citation>
    <scope>NUCLEOTIDE SEQUENCE [LARGE SCALE MRNA] (ISOFORM 3)</scope>
</reference>
<reference key="5">
    <citation type="submission" date="2005-03" db="EMBL/GenBank/DDBJ databases">
        <authorList>
            <person name="Totoki Y."/>
            <person name="Toyoda A."/>
            <person name="Takeda T."/>
            <person name="Sakaki Y."/>
            <person name="Tanaka A."/>
            <person name="Yokoyama S."/>
            <person name="Ohara O."/>
            <person name="Nagase T."/>
            <person name="Kikuno R.F."/>
        </authorList>
    </citation>
    <scope>NUCLEOTIDE SEQUENCE [LARGE SCALE MRNA] (ISOFORM 1)</scope>
    <source>
        <tissue>Brain</tissue>
    </source>
</reference>
<reference key="6">
    <citation type="journal article" date="2007" name="BMC Genomics">
        <title>The full-ORF clone resource of the German cDNA consortium.</title>
        <authorList>
            <person name="Bechtel S."/>
            <person name="Rosenfelder H."/>
            <person name="Duda A."/>
            <person name="Schmidt C.P."/>
            <person name="Ernst U."/>
            <person name="Wellenreuther R."/>
            <person name="Mehrle A."/>
            <person name="Schuster C."/>
            <person name="Bahr A."/>
            <person name="Bloecker H."/>
            <person name="Heubner D."/>
            <person name="Hoerlein A."/>
            <person name="Michel G."/>
            <person name="Wedler H."/>
            <person name="Koehrer K."/>
            <person name="Ottenwaelder B."/>
            <person name="Poustka A."/>
            <person name="Wiemann S."/>
            <person name="Schupp I."/>
        </authorList>
    </citation>
    <scope>NUCLEOTIDE SEQUENCE [LARGE SCALE MRNA] (ISOFORMS 2 AND 4)</scope>
    <source>
        <tissue>Cerebellum</tissue>
        <tissue>Testis</tissue>
    </source>
</reference>
<reference key="7">
    <citation type="submission" date="2005-09" db="EMBL/GenBank/DDBJ databases">
        <authorList>
            <person name="Mural R.J."/>
            <person name="Istrail S."/>
            <person name="Sutton G.G."/>
            <person name="Florea L."/>
            <person name="Halpern A.L."/>
            <person name="Mobarry C.M."/>
            <person name="Lippert R."/>
            <person name="Walenz B."/>
            <person name="Shatkay H."/>
            <person name="Dew I."/>
            <person name="Miller J.R."/>
            <person name="Flanigan M.J."/>
            <person name="Edwards N.J."/>
            <person name="Bolanos R."/>
            <person name="Fasulo D."/>
            <person name="Halldorsson B.V."/>
            <person name="Hannenhalli S."/>
            <person name="Turner R."/>
            <person name="Yooseph S."/>
            <person name="Lu F."/>
            <person name="Nusskern D.R."/>
            <person name="Shue B.C."/>
            <person name="Zheng X.H."/>
            <person name="Zhong F."/>
            <person name="Delcher A.L."/>
            <person name="Huson D.H."/>
            <person name="Kravitz S.A."/>
            <person name="Mouchard L."/>
            <person name="Reinert K."/>
            <person name="Remington K.A."/>
            <person name="Clark A.G."/>
            <person name="Waterman M.S."/>
            <person name="Eichler E.E."/>
            <person name="Adams M.D."/>
            <person name="Hunkapiller M.W."/>
            <person name="Myers E.W."/>
            <person name="Venter J.C."/>
        </authorList>
    </citation>
    <scope>NUCLEOTIDE SEQUENCE [LARGE SCALE GENOMIC DNA]</scope>
</reference>
<reference key="8">
    <citation type="journal article" date="2004" name="Genome Res.">
        <title>The status, quality, and expansion of the NIH full-length cDNA project: the Mammalian Gene Collection (MGC).</title>
        <authorList>
            <consortium name="The MGC Project Team"/>
        </authorList>
    </citation>
    <scope>NUCLEOTIDE SEQUENCE [LARGE SCALE MRNA] (ISOFORM 3)</scope>
    <source>
        <tissue>Lung</tissue>
    </source>
</reference>
<sequence length="446" mass="49747">MEASFVQTTMALGLSSKKASSRNVAVERKNLITVCRFSVKTLLEKYTAEPIDDSSEEFVNFAAILEQILSHRFKACAPAGPVSWFSSDGQRGFWDYIRLACSKVPNNCVSSIENMENISTARAKGRAWIRVALMEKRMSEYITTALRDTRTTRRFYDSGAIMLRDEATILTGMLIGLSAIDFSFCLKGEVLDGKTPVVIDYTPYLKFTQSYDYLTDEEERHSAESSTSEDNSPEHPYLPLVTDEDSWYSKWHKMEQKFRIVYAQKGYLEELVRLRESQLKDLEAENRRLQLQLEEAAAQNQREKRELEGVILELQEQLTGLIPSDHAPLAQGSKELTTPLVNQWPSLGTLNGAEGASNSKLYRRHSFMSTEPLSAEASLSSDSQRLGEGTRDEEPWGPIGKDPTPSMLGLCGSLASIPSCKSLASFKSNECLVSDSPEGSPALSPS</sequence>
<accession>Q59EK9</accession>
<accession>B2R974</accession>
<accession>O15483</accession>
<accession>O60651</accession>
<accession>Q7Z3S2</accession>
<accession>Q9UF50</accession>
<evidence type="ECO:0000250" key="1"/>
<evidence type="ECO:0000250" key="2">
    <source>
        <dbReference type="UniProtKB" id="O08576"/>
    </source>
</evidence>
<evidence type="ECO:0000255" key="3"/>
<evidence type="ECO:0000255" key="4">
    <source>
        <dbReference type="PROSITE-ProRule" id="PRU00178"/>
    </source>
</evidence>
<evidence type="ECO:0000256" key="5">
    <source>
        <dbReference type="SAM" id="MobiDB-lite"/>
    </source>
</evidence>
<evidence type="ECO:0000303" key="6">
    <source>
    </source>
</evidence>
<evidence type="ECO:0000303" key="7">
    <source>
    </source>
</evidence>
<evidence type="ECO:0000303" key="8">
    <source>
    </source>
</evidence>
<evidence type="ECO:0000303" key="9">
    <source>
    </source>
</evidence>
<evidence type="ECO:0000303" key="10">
    <source ref="2"/>
</evidence>
<evidence type="ECO:0000303" key="11">
    <source ref="4"/>
</evidence>
<evidence type="ECO:0000305" key="12"/>